<comment type="function">
    <text evidence="2">Catalyzes the transfer of phosphatidylinositol (PI) and phosphatidic acid (PA) between membranes (By similarity). Binds PA derived from the phospholipase D signaling pathway and among the cellular PA species, preferably binds to the C16:0/16:1 and C16:1/18:1 PA species (By similarity).</text>
</comment>
<comment type="catalytic activity">
    <reaction evidence="2">
        <text>a 1,2-diacyl-sn-glycero-3-phospho-(1D-myo-inositol)(in) = a 1,2-diacyl-sn-glycero-3-phospho-(1D-myo-inositol)(out)</text>
        <dbReference type="Rhea" id="RHEA:38691"/>
        <dbReference type="ChEBI" id="CHEBI:57880"/>
    </reaction>
    <physiologicalReaction direction="left-to-right" evidence="2">
        <dbReference type="Rhea" id="RHEA:38692"/>
    </physiologicalReaction>
</comment>
<comment type="catalytic activity">
    <reaction evidence="2">
        <text>a 1,2-diacyl-sn-glycero-3-phosphate(in) = a 1,2-diacyl-sn-glycero-3-phosphate(out)</text>
        <dbReference type="Rhea" id="RHEA:36435"/>
        <dbReference type="ChEBI" id="CHEBI:58608"/>
    </reaction>
    <physiologicalReaction direction="left-to-right" evidence="2">
        <dbReference type="Rhea" id="RHEA:36436"/>
    </physiologicalReaction>
</comment>
<comment type="subcellular location">
    <subcellularLocation>
        <location evidence="1">Cytoplasm</location>
    </subcellularLocation>
</comment>
<comment type="similarity">
    <text evidence="4">Belongs to the PtdIns transfer protein family. PI transfer class IIB subfamily.</text>
</comment>
<protein>
    <recommendedName>
        <fullName>Cytoplasmic phosphatidylinositol transfer protein 1</fullName>
    </recommendedName>
    <alternativeName>
        <fullName>Retinal degeneration B homolog beta</fullName>
        <shortName>RdgBbeta</shortName>
    </alternativeName>
</protein>
<keyword id="KW-0963">Cytoplasm</keyword>
<keyword id="KW-0445">Lipid transport</keyword>
<keyword id="KW-0446">Lipid-binding</keyword>
<keyword id="KW-1185">Reference proteome</keyword>
<keyword id="KW-0813">Transport</keyword>
<gene>
    <name type="primary">pitpnc1</name>
    <name type="ORF">TGas018n09.1</name>
</gene>
<evidence type="ECO:0000250" key="1">
    <source>
        <dbReference type="UniProtKB" id="Q8K4R4"/>
    </source>
</evidence>
<evidence type="ECO:0000250" key="2">
    <source>
        <dbReference type="UniProtKB" id="Q9UKF7"/>
    </source>
</evidence>
<evidence type="ECO:0000256" key="3">
    <source>
        <dbReference type="SAM" id="MobiDB-lite"/>
    </source>
</evidence>
<evidence type="ECO:0000305" key="4"/>
<proteinExistence type="evidence at transcript level"/>
<organism>
    <name type="scientific">Xenopus tropicalis</name>
    <name type="common">Western clawed frog</name>
    <name type="synonym">Silurana tropicalis</name>
    <dbReference type="NCBI Taxonomy" id="8364"/>
    <lineage>
        <taxon>Eukaryota</taxon>
        <taxon>Metazoa</taxon>
        <taxon>Chordata</taxon>
        <taxon>Craniata</taxon>
        <taxon>Vertebrata</taxon>
        <taxon>Euteleostomi</taxon>
        <taxon>Amphibia</taxon>
        <taxon>Batrachia</taxon>
        <taxon>Anura</taxon>
        <taxon>Pipoidea</taxon>
        <taxon>Pipidae</taxon>
        <taxon>Xenopodinae</taxon>
        <taxon>Xenopus</taxon>
        <taxon>Silurana</taxon>
    </lineage>
</organism>
<feature type="chain" id="PRO_0000287532" description="Cytoplasmic phosphatidylinositol transfer protein 1">
    <location>
        <begin position="1"/>
        <end position="329"/>
    </location>
</feature>
<feature type="region of interest" description="Disordered" evidence="3">
    <location>
        <begin position="267"/>
        <end position="329"/>
    </location>
</feature>
<accession>Q28CA0</accession>
<dbReference type="EMBL" id="CR942381">
    <property type="protein sequence ID" value="CAJ82527.1"/>
    <property type="molecule type" value="mRNA"/>
</dbReference>
<dbReference type="RefSeq" id="NP_001039199.1">
    <property type="nucleotide sequence ID" value="NM_001045734.1"/>
</dbReference>
<dbReference type="SMR" id="Q28CA0"/>
<dbReference type="FunCoup" id="Q28CA0">
    <property type="interactions" value="2059"/>
</dbReference>
<dbReference type="PaxDb" id="8364-ENSXETP00000060192"/>
<dbReference type="GeneID" id="734057"/>
<dbReference type="KEGG" id="xtr:734057"/>
<dbReference type="AGR" id="Xenbase:XB-GENE-959703"/>
<dbReference type="CTD" id="26207"/>
<dbReference type="Xenbase" id="XB-GENE-959703">
    <property type="gene designation" value="pitpnc1"/>
</dbReference>
<dbReference type="eggNOG" id="KOG3668">
    <property type="taxonomic scope" value="Eukaryota"/>
</dbReference>
<dbReference type="InParanoid" id="Q28CA0"/>
<dbReference type="OMA" id="VENRPCE"/>
<dbReference type="OrthoDB" id="18453at2759"/>
<dbReference type="Proteomes" id="UP000008143">
    <property type="component" value="Chromosome 10"/>
</dbReference>
<dbReference type="GO" id="GO:0005737">
    <property type="term" value="C:cytoplasm"/>
    <property type="evidence" value="ECO:0000250"/>
    <property type="project" value="UniProtKB"/>
</dbReference>
<dbReference type="GO" id="GO:0008289">
    <property type="term" value="F:lipid binding"/>
    <property type="evidence" value="ECO:0007669"/>
    <property type="project" value="UniProtKB-KW"/>
</dbReference>
<dbReference type="GO" id="GO:1990050">
    <property type="term" value="F:phosphatidic acid transfer activity"/>
    <property type="evidence" value="ECO:0000250"/>
    <property type="project" value="UniProtKB"/>
</dbReference>
<dbReference type="GO" id="GO:0008526">
    <property type="term" value="F:phosphatidylinositol transfer activity"/>
    <property type="evidence" value="ECO:0000250"/>
    <property type="project" value="UniProtKB"/>
</dbReference>
<dbReference type="GO" id="GO:0007165">
    <property type="term" value="P:signal transduction"/>
    <property type="evidence" value="ECO:0000250"/>
    <property type="project" value="UniProtKB"/>
</dbReference>
<dbReference type="CDD" id="cd08890">
    <property type="entry name" value="SRPBCC_PITPNC1_like"/>
    <property type="match status" value="1"/>
</dbReference>
<dbReference type="FunFam" id="3.30.530.20:FF:000011">
    <property type="entry name" value="cytoplasmic phosphatidylinositol transfer protein 1 isoform X2"/>
    <property type="match status" value="1"/>
</dbReference>
<dbReference type="Gene3D" id="3.30.530.20">
    <property type="match status" value="1"/>
</dbReference>
<dbReference type="InterPro" id="IPR001666">
    <property type="entry name" value="PI_transfer"/>
</dbReference>
<dbReference type="InterPro" id="IPR055261">
    <property type="entry name" value="PI_transfer_N"/>
</dbReference>
<dbReference type="InterPro" id="IPR023393">
    <property type="entry name" value="START-like_dom_sf"/>
</dbReference>
<dbReference type="PANTHER" id="PTHR10658:SF55">
    <property type="entry name" value="CYTOPLASMIC PHOSPHATIDYLINOSITOL TRANSFER PROTEIN 1"/>
    <property type="match status" value="1"/>
</dbReference>
<dbReference type="PANTHER" id="PTHR10658">
    <property type="entry name" value="PHOSPHATIDYLINOSITOL TRANSFER PROTEIN"/>
    <property type="match status" value="1"/>
</dbReference>
<dbReference type="Pfam" id="PF02121">
    <property type="entry name" value="IP_trans"/>
    <property type="match status" value="1"/>
</dbReference>
<dbReference type="PRINTS" id="PR00391">
    <property type="entry name" value="PITRANSFER"/>
</dbReference>
<dbReference type="SUPFAM" id="SSF55961">
    <property type="entry name" value="Bet v1-like"/>
    <property type="match status" value="1"/>
</dbReference>
<reference key="1">
    <citation type="submission" date="2006-10" db="EMBL/GenBank/DDBJ databases">
        <authorList>
            <consortium name="Sanger Xenopus tropicalis EST/cDNA project"/>
        </authorList>
    </citation>
    <scope>NUCLEOTIDE SEQUENCE [LARGE SCALE MRNA]</scope>
    <source>
        <tissue>Gastrula</tissue>
    </source>
</reference>
<sequence>MLLKEYRICMPLTVEEYRIGQLYMISKHSHEQSERGEGVEVVQNEPYEDPVHGQGQLTEKRVYLNSKLPSWARAVVPKIFYVTEKAWNYYPYTITEYTCSFLPKFSIHIETKYEDNKGSNDNIFESEAKDAEREICFVDIACDEIPERYYKESEDPKNFVSEKTGRGQLKEGWREAQEPIMCSYKLVAVKFEVWGLQSRVEQFVHKVVRDILLIGHRQAFAWVDEWYDMTMDEVREYERTTQEATNRKIGVFPPAISISDITLPSHSHGGYSSAPSTPLATDAPEFLSVPKDRPRKKSAPETLTLPDPSQICLNVQPGAGNKPSLAKPE</sequence>
<name>PITC1_XENTR</name>